<organism>
    <name type="scientific">Escherichia coli (strain K12 / DH10B)</name>
    <dbReference type="NCBI Taxonomy" id="316385"/>
    <lineage>
        <taxon>Bacteria</taxon>
        <taxon>Pseudomonadati</taxon>
        <taxon>Pseudomonadota</taxon>
        <taxon>Gammaproteobacteria</taxon>
        <taxon>Enterobacterales</taxon>
        <taxon>Enterobacteriaceae</taxon>
        <taxon>Escherichia</taxon>
    </lineage>
</organism>
<reference key="1">
    <citation type="journal article" date="2008" name="J. Bacteriol.">
        <title>The complete genome sequence of Escherichia coli DH10B: insights into the biology of a laboratory workhorse.</title>
        <authorList>
            <person name="Durfee T."/>
            <person name="Nelson R."/>
            <person name="Baldwin S."/>
            <person name="Plunkett G. III"/>
            <person name="Burland V."/>
            <person name="Mau B."/>
            <person name="Petrosino J.F."/>
            <person name="Qin X."/>
            <person name="Muzny D.M."/>
            <person name="Ayele M."/>
            <person name="Gibbs R.A."/>
            <person name="Csorgo B."/>
            <person name="Posfai G."/>
            <person name="Weinstock G.M."/>
            <person name="Blattner F.R."/>
        </authorList>
    </citation>
    <scope>NUCLEOTIDE SEQUENCE [LARGE SCALE GENOMIC DNA]</scope>
    <source>
        <strain>K12 / DH10B</strain>
    </source>
</reference>
<protein>
    <recommendedName>
        <fullName evidence="1">Ribosomal RNA large subunit methyltransferase K/L</fullName>
    </recommendedName>
    <domain>
        <recommendedName>
            <fullName evidence="1">23S rRNA m2G2445 methyltransferase</fullName>
            <ecNumber evidence="1">2.1.1.173</ecNumber>
        </recommendedName>
        <alternativeName>
            <fullName evidence="1">rRNA (guanine-N(2)-)-methyltransferase RlmL</fullName>
        </alternativeName>
    </domain>
    <domain>
        <recommendedName>
            <fullName evidence="1">23S rRNA m7G2069 methyltransferase</fullName>
            <ecNumber evidence="1">2.1.1.264</ecNumber>
        </recommendedName>
        <alternativeName>
            <fullName evidence="1">rRNA (guanine-N(7)-)-methyltransferase RlmK</fullName>
        </alternativeName>
    </domain>
</protein>
<proteinExistence type="inferred from homology"/>
<sequence length="702" mass="78854">MNSLFASTARGLEELLKTELENLGAVECQVVQGGVHFKGDTRLVYQSLMWSRLASRIMLPLGECKVYSDLDLYLGVQAINWTEMFNPGATFAVHFSGLNDTIRNSQYGAMKVKDAIVDAFTRKNLPRPNVDRDAPDIRVNVWLHKETASIALDLSGDGLHLRGYRDRAGIAPIKETLAAAIVMRSGWQPGTPLLDPMCGSGTLLIEAAMLATDRAPGLHRGRWGFSGWAQHDEAIWQEVKAEAQTRARKGLAEYSSHFYGSDSDARVIQRARTNARLAGIGELITFEVKDVAQLTNPLPKGPYGTVLSNPPYGERLDSEPALIALHSLLGRIMKNQFGGWNLSLFSASPDLLSCLQLRADKQYKAKNGPLDCVQKNYHVAESTPDSKPAMVAEDYTNRLRKNLKKFEKWARQEGIECYRLYDADLPEYNVAVDRYADWVVVQEYAPPKTIDAHKARQRLFDIIAATISVLGIAPNKLVLKTRERQKGKNQYQKLGEKGEFLEVTEYNAHLWVNLTDYLDTGLFLDHRIARRMLGQMSKGKDFLNLFSYTGSATVHAGLGGARSTTTVDMSRTYLEWAERNLRLNGLTGRAHRLIQADCLAWLREANEQFDLIFIDPPTFSNSKRMEDAFDVQRDHLALMKDLKRLLRAGGTIMFSNNKRGFRMDLDGLAKLGLKAQEITQKTLSQDFARNRQIHNCWLITAA</sequence>
<feature type="chain" id="PRO_0000366740" description="Ribosomal RNA large subunit methyltransferase K/L">
    <location>
        <begin position="1"/>
        <end position="702"/>
    </location>
</feature>
<feature type="domain" description="THUMP" evidence="1">
    <location>
        <begin position="43"/>
        <end position="154"/>
    </location>
</feature>
<dbReference type="EC" id="2.1.1.173" evidence="1"/>
<dbReference type="EC" id="2.1.1.264" evidence="1"/>
<dbReference type="EMBL" id="CP000948">
    <property type="protein sequence ID" value="ACB02148.1"/>
    <property type="molecule type" value="Genomic_DNA"/>
</dbReference>
<dbReference type="SMR" id="B1X8Q2"/>
<dbReference type="DNASU" id="6060358"/>
<dbReference type="KEGG" id="ecd:ECDH10B_1018"/>
<dbReference type="HOGENOM" id="CLU_014042_2_0_6"/>
<dbReference type="GO" id="GO:0005737">
    <property type="term" value="C:cytoplasm"/>
    <property type="evidence" value="ECO:0007669"/>
    <property type="project" value="UniProtKB-SubCell"/>
</dbReference>
<dbReference type="GO" id="GO:0052915">
    <property type="term" value="F:23S rRNA (guanine(2445)-N(2))-methyltransferase activity"/>
    <property type="evidence" value="ECO:0007669"/>
    <property type="project" value="UniProtKB-UniRule"/>
</dbReference>
<dbReference type="GO" id="GO:0003723">
    <property type="term" value="F:RNA binding"/>
    <property type="evidence" value="ECO:0007669"/>
    <property type="project" value="UniProtKB-KW"/>
</dbReference>
<dbReference type="GO" id="GO:0070043">
    <property type="term" value="F:rRNA (guanine-N7-)-methyltransferase activity"/>
    <property type="evidence" value="ECO:0007669"/>
    <property type="project" value="UniProtKB-UniRule"/>
</dbReference>
<dbReference type="CDD" id="cd02440">
    <property type="entry name" value="AdoMet_MTases"/>
    <property type="match status" value="1"/>
</dbReference>
<dbReference type="CDD" id="cd11715">
    <property type="entry name" value="THUMP_AdoMetMT"/>
    <property type="match status" value="1"/>
</dbReference>
<dbReference type="FunFam" id="3.30.750.80:FF:000001">
    <property type="entry name" value="Ribosomal RNA large subunit methyltransferase K/L"/>
    <property type="match status" value="1"/>
</dbReference>
<dbReference type="FunFam" id="3.40.50.150:FF:000039">
    <property type="entry name" value="Ribosomal RNA large subunit methyltransferase K/L"/>
    <property type="match status" value="1"/>
</dbReference>
<dbReference type="Gene3D" id="3.30.2130.30">
    <property type="match status" value="1"/>
</dbReference>
<dbReference type="Gene3D" id="3.30.750.80">
    <property type="entry name" value="RNA methyltransferase domain (HRMD) like"/>
    <property type="match status" value="1"/>
</dbReference>
<dbReference type="Gene3D" id="3.40.50.150">
    <property type="entry name" value="Vaccinia Virus protein VP39"/>
    <property type="match status" value="2"/>
</dbReference>
<dbReference type="HAMAP" id="MF_01858">
    <property type="entry name" value="23SrRNA_methyltr_KL"/>
    <property type="match status" value="1"/>
</dbReference>
<dbReference type="InterPro" id="IPR017244">
    <property type="entry name" value="23SrRNA_methyltr_KL"/>
</dbReference>
<dbReference type="InterPro" id="IPR002052">
    <property type="entry name" value="DNA_methylase_N6_adenine_CS"/>
</dbReference>
<dbReference type="InterPro" id="IPR000241">
    <property type="entry name" value="RlmKL-like_Mtase"/>
</dbReference>
<dbReference type="InterPro" id="IPR053943">
    <property type="entry name" value="RlmKL-like_Mtase_CS"/>
</dbReference>
<dbReference type="InterPro" id="IPR054170">
    <property type="entry name" value="RlmL_1st"/>
</dbReference>
<dbReference type="InterPro" id="IPR019614">
    <property type="entry name" value="SAM-dep_methyl-trfase"/>
</dbReference>
<dbReference type="InterPro" id="IPR029063">
    <property type="entry name" value="SAM-dependent_MTases_sf"/>
</dbReference>
<dbReference type="InterPro" id="IPR004114">
    <property type="entry name" value="THUMP_dom"/>
</dbReference>
<dbReference type="NCBIfam" id="NF008748">
    <property type="entry name" value="PRK11783.1"/>
    <property type="match status" value="1"/>
</dbReference>
<dbReference type="PANTHER" id="PTHR47313">
    <property type="entry name" value="RIBOSOMAL RNA LARGE SUBUNIT METHYLTRANSFERASE K/L"/>
    <property type="match status" value="1"/>
</dbReference>
<dbReference type="PANTHER" id="PTHR47313:SF1">
    <property type="entry name" value="RIBOSOMAL RNA LARGE SUBUNIT METHYLTRANSFERASE K_L"/>
    <property type="match status" value="1"/>
</dbReference>
<dbReference type="Pfam" id="PF10672">
    <property type="entry name" value="Methyltrans_SAM"/>
    <property type="match status" value="1"/>
</dbReference>
<dbReference type="Pfam" id="PF22020">
    <property type="entry name" value="RlmL_1st"/>
    <property type="match status" value="1"/>
</dbReference>
<dbReference type="Pfam" id="PF02926">
    <property type="entry name" value="THUMP"/>
    <property type="match status" value="1"/>
</dbReference>
<dbReference type="Pfam" id="PF01170">
    <property type="entry name" value="UPF0020"/>
    <property type="match status" value="1"/>
</dbReference>
<dbReference type="PIRSF" id="PIRSF037618">
    <property type="entry name" value="RNA_Mtase_bacteria_prd"/>
    <property type="match status" value="1"/>
</dbReference>
<dbReference type="PRINTS" id="PR00507">
    <property type="entry name" value="N12N6MTFRASE"/>
</dbReference>
<dbReference type="SMART" id="SM00981">
    <property type="entry name" value="THUMP"/>
    <property type="match status" value="1"/>
</dbReference>
<dbReference type="SUPFAM" id="SSF53335">
    <property type="entry name" value="S-adenosyl-L-methionine-dependent methyltransferases"/>
    <property type="match status" value="2"/>
</dbReference>
<dbReference type="PROSITE" id="PS51165">
    <property type="entry name" value="THUMP"/>
    <property type="match status" value="1"/>
</dbReference>
<dbReference type="PROSITE" id="PS01261">
    <property type="entry name" value="UPF0020"/>
    <property type="match status" value="1"/>
</dbReference>
<evidence type="ECO:0000255" key="1">
    <source>
        <dbReference type="HAMAP-Rule" id="MF_01858"/>
    </source>
</evidence>
<comment type="function">
    <text evidence="1">Specifically methylates the guanine in position 2445 (m2G2445) and the guanine in position 2069 (m7G2069) of 23S rRNA.</text>
</comment>
<comment type="catalytic activity">
    <reaction evidence="1">
        <text>guanosine(2445) in 23S rRNA + S-adenosyl-L-methionine = N(2)-methylguanosine(2445) in 23S rRNA + S-adenosyl-L-homocysteine + H(+)</text>
        <dbReference type="Rhea" id="RHEA:42740"/>
        <dbReference type="Rhea" id="RHEA-COMP:10215"/>
        <dbReference type="Rhea" id="RHEA-COMP:10216"/>
        <dbReference type="ChEBI" id="CHEBI:15378"/>
        <dbReference type="ChEBI" id="CHEBI:57856"/>
        <dbReference type="ChEBI" id="CHEBI:59789"/>
        <dbReference type="ChEBI" id="CHEBI:74269"/>
        <dbReference type="ChEBI" id="CHEBI:74481"/>
        <dbReference type="EC" id="2.1.1.173"/>
    </reaction>
</comment>
<comment type="catalytic activity">
    <reaction evidence="1">
        <text>guanosine(2069) in 23S rRNA + S-adenosyl-L-methionine = N(2)-methylguanosine(2069) in 23S rRNA + S-adenosyl-L-homocysteine + H(+)</text>
        <dbReference type="Rhea" id="RHEA:43772"/>
        <dbReference type="Rhea" id="RHEA-COMP:10688"/>
        <dbReference type="Rhea" id="RHEA-COMP:10689"/>
        <dbReference type="ChEBI" id="CHEBI:15378"/>
        <dbReference type="ChEBI" id="CHEBI:57856"/>
        <dbReference type="ChEBI" id="CHEBI:59789"/>
        <dbReference type="ChEBI" id="CHEBI:74269"/>
        <dbReference type="ChEBI" id="CHEBI:74481"/>
        <dbReference type="EC" id="2.1.1.264"/>
    </reaction>
</comment>
<comment type="subcellular location">
    <subcellularLocation>
        <location evidence="1">Cytoplasm</location>
    </subcellularLocation>
</comment>
<comment type="similarity">
    <text evidence="1">Belongs to the methyltransferase superfamily. RlmKL family.</text>
</comment>
<name>RLMKL_ECODH</name>
<keyword id="KW-0963">Cytoplasm</keyword>
<keyword id="KW-0489">Methyltransferase</keyword>
<keyword id="KW-0694">RNA-binding</keyword>
<keyword id="KW-0698">rRNA processing</keyword>
<keyword id="KW-0949">S-adenosyl-L-methionine</keyword>
<keyword id="KW-0808">Transferase</keyword>
<gene>
    <name evidence="1" type="primary">rlmL</name>
    <name type="ordered locus">ECDH10B_1018</name>
</gene>
<accession>B1X8Q2</accession>